<organism>
    <name type="scientific">Dictyostelium discoideum</name>
    <name type="common">Social amoeba</name>
    <dbReference type="NCBI Taxonomy" id="44689"/>
    <lineage>
        <taxon>Eukaryota</taxon>
        <taxon>Amoebozoa</taxon>
        <taxon>Evosea</taxon>
        <taxon>Eumycetozoa</taxon>
        <taxon>Dictyostelia</taxon>
        <taxon>Dictyosteliales</taxon>
        <taxon>Dictyosteliaceae</taxon>
        <taxon>Dictyostelium</taxon>
    </lineage>
</organism>
<evidence type="ECO:0000255" key="1"/>
<evidence type="ECO:0000255" key="2">
    <source>
        <dbReference type="PROSITE-ProRule" id="PRU00304"/>
    </source>
</evidence>
<evidence type="ECO:0000256" key="3">
    <source>
        <dbReference type="SAM" id="MobiDB-lite"/>
    </source>
</evidence>
<evidence type="ECO:0000269" key="4">
    <source>
    </source>
</evidence>
<evidence type="ECO:0000305" key="5"/>
<sequence length="715" mass="81261">MNSIIGGTDPLSMIFKEEEIKKQQILLEKEEKEKQEQQQKKLNKDNIFKLEEEGKKLELSTKVHIQHPNISTTSDNNSLLDPSNLTLNGKKKKWINSFCIINFDLEIGQVLDYSFPQVNFKEEESTNLCFLSFPDSNSHLQGDIIYSFKLKETSSLGNGQCNFQYGYVFFRQEKDSSISRGYLQKSVVLLSDESFVGLFKKVMEIVGPLYFDHGNTLLEVAYQNIMNWPELKLGQTYELPILGYILTFHVPHTRGTPHIIDPVVKQHQLGGGSGGGLSSSPSSSSGGGNIPTSNTTGVSPSIWSEMKLVSNLKSIDIYGCFKSFTTKLWMLWELVLLGHPLLVISPNPPMCSDSVLALVSLISPLHYCGDYRPYFTIHDTDFHKYTSFSHLSGTRPDDSNNNNNQDDSEYNNNNNNNGIPPSILGVTNPFFLKALGNWPNILTIGTTQQRLGGFKKIKSSLPNIMSKDLLTRHVLDNKEKILSEYKPFISPDKSVLKKITESADDDIINEVLRTHFLQLTQKFLIPLERYFSLLLPLAKTISIFQRPPRLKPFIKEECLNKIMETDERFIIDNKSKEIELYKQFLDCVNFKQWLDDKRAQAIKHLNILYRKAILDADIHTLLRGKPISTATDLLKRVEDQLILEENLFQTSKEIKDKFKSHIEIIRQYKNNCDNNNENNNNNILLTSPIKSTSLSSIALPPSSTTVTTKTTTTTK</sequence>
<protein>
    <recommendedName>
        <fullName>Protein DENND6 homolog</fullName>
    </recommendedName>
</protein>
<keyword id="KW-0175">Coiled coil</keyword>
<keyword id="KW-1185">Reference proteome</keyword>
<dbReference type="EMBL" id="AAFI02000036">
    <property type="protein sequence ID" value="EAL67219.1"/>
    <property type="molecule type" value="Genomic_DNA"/>
</dbReference>
<dbReference type="RefSeq" id="XP_641200.1">
    <property type="nucleotide sequence ID" value="XM_636108.1"/>
</dbReference>
<dbReference type="FunCoup" id="Q54VA9">
    <property type="interactions" value="252"/>
</dbReference>
<dbReference type="STRING" id="44689.Q54VA9"/>
<dbReference type="PaxDb" id="44689-DDB0232144"/>
<dbReference type="EnsemblProtists" id="EAL67219">
    <property type="protein sequence ID" value="EAL67219"/>
    <property type="gene ID" value="DDB_G0280481"/>
</dbReference>
<dbReference type="GeneID" id="8622581"/>
<dbReference type="KEGG" id="ddi:DDB_G0280481"/>
<dbReference type="dictyBase" id="DDB_G0280481"/>
<dbReference type="VEuPathDB" id="AmoebaDB:DDB_G0280481"/>
<dbReference type="eggNOG" id="KOG2432">
    <property type="taxonomic scope" value="Eukaryota"/>
</dbReference>
<dbReference type="HOGENOM" id="CLU_017013_1_0_1"/>
<dbReference type="InParanoid" id="Q54VA9"/>
<dbReference type="OMA" id="EANLEHW"/>
<dbReference type="PhylomeDB" id="Q54VA9"/>
<dbReference type="Reactome" id="R-DDI-8876198">
    <property type="pathway name" value="RAB GEFs exchange GTP for GDP on RABs"/>
</dbReference>
<dbReference type="PRO" id="PR:Q54VA9"/>
<dbReference type="Proteomes" id="UP000002195">
    <property type="component" value="Chromosome 3"/>
</dbReference>
<dbReference type="GO" id="GO:0055037">
    <property type="term" value="C:recycling endosome"/>
    <property type="evidence" value="ECO:0000318"/>
    <property type="project" value="GO_Central"/>
</dbReference>
<dbReference type="GO" id="GO:0005085">
    <property type="term" value="F:guanyl-nucleotide exchange factor activity"/>
    <property type="evidence" value="ECO:0007669"/>
    <property type="project" value="InterPro"/>
</dbReference>
<dbReference type="InterPro" id="IPR018307">
    <property type="entry name" value="ABL9/DENND6_dom"/>
</dbReference>
<dbReference type="InterPro" id="IPR024224">
    <property type="entry name" value="DENND6"/>
</dbReference>
<dbReference type="InterPro" id="IPR037516">
    <property type="entry name" value="Tripartite_DENN"/>
</dbReference>
<dbReference type="PANTHER" id="PTHR13677">
    <property type="entry name" value="LD41638P"/>
    <property type="match status" value="1"/>
</dbReference>
<dbReference type="PANTHER" id="PTHR13677:SF0">
    <property type="entry name" value="LD41638P"/>
    <property type="match status" value="1"/>
</dbReference>
<dbReference type="Pfam" id="PF09794">
    <property type="entry name" value="Avl9"/>
    <property type="match status" value="1"/>
</dbReference>
<dbReference type="PROSITE" id="PS50211">
    <property type="entry name" value="DENN"/>
    <property type="match status" value="1"/>
</dbReference>
<reference key="1">
    <citation type="journal article" date="2005" name="Nature">
        <title>The genome of the social amoeba Dictyostelium discoideum.</title>
        <authorList>
            <person name="Eichinger L."/>
            <person name="Pachebat J.A."/>
            <person name="Gloeckner G."/>
            <person name="Rajandream M.A."/>
            <person name="Sucgang R."/>
            <person name="Berriman M."/>
            <person name="Song J."/>
            <person name="Olsen R."/>
            <person name="Szafranski K."/>
            <person name="Xu Q."/>
            <person name="Tunggal B."/>
            <person name="Kummerfeld S."/>
            <person name="Madera M."/>
            <person name="Konfortov B.A."/>
            <person name="Rivero F."/>
            <person name="Bankier A.T."/>
            <person name="Lehmann R."/>
            <person name="Hamlin N."/>
            <person name="Davies R."/>
            <person name="Gaudet P."/>
            <person name="Fey P."/>
            <person name="Pilcher K."/>
            <person name="Chen G."/>
            <person name="Saunders D."/>
            <person name="Sodergren E.J."/>
            <person name="Davis P."/>
            <person name="Kerhornou A."/>
            <person name="Nie X."/>
            <person name="Hall N."/>
            <person name="Anjard C."/>
            <person name="Hemphill L."/>
            <person name="Bason N."/>
            <person name="Farbrother P."/>
            <person name="Desany B."/>
            <person name="Just E."/>
            <person name="Morio T."/>
            <person name="Rost R."/>
            <person name="Churcher C.M."/>
            <person name="Cooper J."/>
            <person name="Haydock S."/>
            <person name="van Driessche N."/>
            <person name="Cronin A."/>
            <person name="Goodhead I."/>
            <person name="Muzny D.M."/>
            <person name="Mourier T."/>
            <person name="Pain A."/>
            <person name="Lu M."/>
            <person name="Harper D."/>
            <person name="Lindsay R."/>
            <person name="Hauser H."/>
            <person name="James K.D."/>
            <person name="Quiles M."/>
            <person name="Madan Babu M."/>
            <person name="Saito T."/>
            <person name="Buchrieser C."/>
            <person name="Wardroper A."/>
            <person name="Felder M."/>
            <person name="Thangavelu M."/>
            <person name="Johnson D."/>
            <person name="Knights A."/>
            <person name="Loulseged H."/>
            <person name="Mungall K.L."/>
            <person name="Oliver K."/>
            <person name="Price C."/>
            <person name="Quail M.A."/>
            <person name="Urushihara H."/>
            <person name="Hernandez J."/>
            <person name="Rabbinowitsch E."/>
            <person name="Steffen D."/>
            <person name="Sanders M."/>
            <person name="Ma J."/>
            <person name="Kohara Y."/>
            <person name="Sharp S."/>
            <person name="Simmonds M.N."/>
            <person name="Spiegler S."/>
            <person name="Tivey A."/>
            <person name="Sugano S."/>
            <person name="White B."/>
            <person name="Walker D."/>
            <person name="Woodward J.R."/>
            <person name="Winckler T."/>
            <person name="Tanaka Y."/>
            <person name="Shaulsky G."/>
            <person name="Schleicher M."/>
            <person name="Weinstock G.M."/>
            <person name="Rosenthal A."/>
            <person name="Cox E.C."/>
            <person name="Chisholm R.L."/>
            <person name="Gibbs R.A."/>
            <person name="Loomis W.F."/>
            <person name="Platzer M."/>
            <person name="Kay R.R."/>
            <person name="Williams J.G."/>
            <person name="Dear P.H."/>
            <person name="Noegel A.A."/>
            <person name="Barrell B.G."/>
            <person name="Kuspa A."/>
        </authorList>
    </citation>
    <scope>NUCLEOTIDE SEQUENCE [LARGE SCALE GENOMIC DNA]</scope>
    <source>
        <strain>AX4</strain>
    </source>
</reference>
<reference key="2">
    <citation type="journal article" date="2006" name="J. Cell Sci.">
        <title>Functional genomics in Dictyostelium: midA, a new conserved protein, is required for mitochondrial function and development.</title>
        <authorList>
            <person name="Torija P."/>
            <person name="Vicente J.J."/>
            <person name="Rodrigues T.B."/>
            <person name="Robles A."/>
            <person name="Cerdan S."/>
            <person name="Sastre L."/>
            <person name="Calvo R.M."/>
            <person name="Escalante R."/>
        </authorList>
    </citation>
    <scope>DISRUPTION PHENOTYPE</scope>
</reference>
<comment type="disruption phenotype">
    <text evidence="4">No visible phenotype.</text>
</comment>
<comment type="similarity">
    <text evidence="5">Belongs to the DENND6 family.</text>
</comment>
<feature type="chain" id="PRO_0000356845" description="Protein DENND6 homolog">
    <location>
        <begin position="1"/>
        <end position="715"/>
    </location>
</feature>
<feature type="domain" description="uDENN" evidence="2">
    <location>
        <begin position="96"/>
        <end position="273"/>
    </location>
</feature>
<feature type="domain" description="cDENN" evidence="2">
    <location>
        <begin position="299"/>
        <end position="476"/>
    </location>
</feature>
<feature type="domain" description="dDENN" evidence="2">
    <location>
        <begin position="478"/>
        <end position="600"/>
    </location>
</feature>
<feature type="region of interest" description="Disordered" evidence="3">
    <location>
        <begin position="269"/>
        <end position="296"/>
    </location>
</feature>
<feature type="region of interest" description="Disordered" evidence="3">
    <location>
        <begin position="392"/>
        <end position="416"/>
    </location>
</feature>
<feature type="coiled-coil region" evidence="1">
    <location>
        <begin position="13"/>
        <end position="58"/>
    </location>
</feature>
<feature type="compositionally biased region" description="Low complexity" evidence="3">
    <location>
        <begin position="399"/>
        <end position="416"/>
    </location>
</feature>
<proteinExistence type="inferred from homology"/>
<accession>Q54VA9</accession>
<name>F116_DICDI</name>
<gene>
    <name type="ORF">DDB_G0280481</name>
</gene>